<protein>
    <recommendedName>
        <fullName evidence="1">Chaperonin GroEL</fullName>
        <ecNumber evidence="1">5.6.1.7</ecNumber>
    </recommendedName>
    <alternativeName>
        <fullName evidence="1">60 kDa chaperonin</fullName>
    </alternativeName>
    <alternativeName>
        <fullName evidence="1">Chaperonin-60</fullName>
        <shortName evidence="1">Cpn60</shortName>
    </alternativeName>
</protein>
<feature type="chain" id="PRO_0000063542" description="Chaperonin GroEL">
    <location>
        <begin position="1"/>
        <end position="540"/>
    </location>
</feature>
<feature type="binding site" evidence="1">
    <location>
        <begin position="29"/>
        <end position="32"/>
    </location>
    <ligand>
        <name>ATP</name>
        <dbReference type="ChEBI" id="CHEBI:30616"/>
    </ligand>
</feature>
<feature type="binding site" evidence="1">
    <location>
        <begin position="86"/>
        <end position="90"/>
    </location>
    <ligand>
        <name>ATP</name>
        <dbReference type="ChEBI" id="CHEBI:30616"/>
    </ligand>
</feature>
<feature type="binding site" evidence="1">
    <location>
        <position position="413"/>
    </location>
    <ligand>
        <name>ATP</name>
        <dbReference type="ChEBI" id="CHEBI:30616"/>
    </ligand>
</feature>
<feature type="binding site" evidence="1">
    <location>
        <begin position="476"/>
        <end position="478"/>
    </location>
    <ligand>
        <name>ATP</name>
        <dbReference type="ChEBI" id="CHEBI:30616"/>
    </ligand>
</feature>
<feature type="binding site" evidence="1">
    <location>
        <position position="492"/>
    </location>
    <ligand>
        <name>ATP</name>
        <dbReference type="ChEBI" id="CHEBI:30616"/>
    </ligand>
</feature>
<reference key="1">
    <citation type="journal article" date="2002" name="Proc. Natl. Acad. Sci. U.S.A.">
        <title>Complete genome sequence and comparative genomic analysis of an emerging human pathogen, serotype V Streptococcus agalactiae.</title>
        <authorList>
            <person name="Tettelin H."/>
            <person name="Masignani V."/>
            <person name="Cieslewicz M.J."/>
            <person name="Eisen J.A."/>
            <person name="Peterson S.N."/>
            <person name="Wessels M.R."/>
            <person name="Paulsen I.T."/>
            <person name="Nelson K.E."/>
            <person name="Margarit I."/>
            <person name="Read T.D."/>
            <person name="Madoff L.C."/>
            <person name="Wolf A.M."/>
            <person name="Beanan M.J."/>
            <person name="Brinkac L.M."/>
            <person name="Daugherty S.C."/>
            <person name="DeBoy R.T."/>
            <person name="Durkin A.S."/>
            <person name="Kolonay J.F."/>
            <person name="Madupu R."/>
            <person name="Lewis M.R."/>
            <person name="Radune D."/>
            <person name="Fedorova N.B."/>
            <person name="Scanlan D."/>
            <person name="Khouri H.M."/>
            <person name="Mulligan S."/>
            <person name="Carty H.A."/>
            <person name="Cline R.T."/>
            <person name="Van Aken S.E."/>
            <person name="Gill J."/>
            <person name="Scarselli M."/>
            <person name="Mora M."/>
            <person name="Iacobini E.T."/>
            <person name="Brettoni C."/>
            <person name="Galli G."/>
            <person name="Mariani M."/>
            <person name="Vegni F."/>
            <person name="Maione D."/>
            <person name="Rinaudo D."/>
            <person name="Rappuoli R."/>
            <person name="Telford J.L."/>
            <person name="Kasper D.L."/>
            <person name="Grandi G."/>
            <person name="Fraser C.M."/>
        </authorList>
    </citation>
    <scope>NUCLEOTIDE SEQUENCE [LARGE SCALE GENOMIC DNA]</scope>
    <source>
        <strain>ATCC BAA-611 / 2603 V/R</strain>
    </source>
</reference>
<comment type="function">
    <text evidence="1">Together with its co-chaperonin GroES, plays an essential role in assisting protein folding. The GroEL-GroES system forms a nano-cage that allows encapsulation of the non-native substrate proteins and provides a physical environment optimized to promote and accelerate protein folding.</text>
</comment>
<comment type="catalytic activity">
    <reaction evidence="1">
        <text>ATP + H2O + a folded polypeptide = ADP + phosphate + an unfolded polypeptide.</text>
        <dbReference type="EC" id="5.6.1.7"/>
    </reaction>
</comment>
<comment type="subunit">
    <text evidence="1">Forms a cylinder of 14 subunits composed of two heptameric rings stacked back-to-back. Interacts with the co-chaperonin GroES.</text>
</comment>
<comment type="subcellular location">
    <subcellularLocation>
        <location evidence="1">Cytoplasm</location>
    </subcellularLocation>
</comment>
<comment type="similarity">
    <text evidence="1">Belongs to the chaperonin (HSP60) family.</text>
</comment>
<keyword id="KW-0067">ATP-binding</keyword>
<keyword id="KW-0143">Chaperone</keyword>
<keyword id="KW-0963">Cytoplasm</keyword>
<keyword id="KW-0413">Isomerase</keyword>
<keyword id="KW-0547">Nucleotide-binding</keyword>
<keyword id="KW-1185">Reference proteome</keyword>
<accession>Q8CX00</accession>
<sequence length="540" mass="57331">MAKDIKFSADARSAMVRGVDILADTVKVTLGPKGRNVVLEKAFGSPLITNDGVTIAKEIELEDHFENMGAKLVSEVASKTNDIAGDGTTTATVLTQAIVREGLKNVTAGANPIGIRRGIETAVSAAVEELKEIAQPVSGKEAIAQVAAVSSRSEKVGEYISEAMERVGNDGVITIEESRGMETELEVVEGMQFDRGYLSQYMVTDNEKMVSELENPYILITDKKISNIQEILPLLEEVLKTNRPLLIIADDVDGEALPTLVLNKIRGTFNVVAVKAPGFGDRRKAMLEDIAILTGGTVVTEDLGLDLKDATMQVLGQSAKVTVDKDSTVIVEGAGDSSAIANRVAIIKSQMEATTSDFDREKLQERLAKLAGGVAVIKVGAATETELKEMKLRIEDALNATRAAVEEGIVSGGGTALVNVIEKVAALKLNGDEETGRNIVLRALEEPVRQIAYNAGYEGSVIIERLKQSEIGTGFNAANGEWVDMVTTGIIDPVKVTRSALQNAASVASLILTTEAVVANKPEPEAPTAPAMDPSMMGGF</sequence>
<proteinExistence type="inferred from homology"/>
<dbReference type="EC" id="5.6.1.7" evidence="1"/>
<dbReference type="EMBL" id="AE009948">
    <property type="protein sequence ID" value="AAN00933.1"/>
    <property type="molecule type" value="Genomic_DNA"/>
</dbReference>
<dbReference type="RefSeq" id="NP_689060.1">
    <property type="nucleotide sequence ID" value="NC_004116.1"/>
</dbReference>
<dbReference type="RefSeq" id="WP_001029978.1">
    <property type="nucleotide sequence ID" value="NC_004116.1"/>
</dbReference>
<dbReference type="SMR" id="Q8CX00"/>
<dbReference type="STRING" id="208435.SAG2074"/>
<dbReference type="GeneID" id="66886814"/>
<dbReference type="KEGG" id="sag:SAG2074"/>
<dbReference type="PATRIC" id="fig|208435.3.peg.2076"/>
<dbReference type="HOGENOM" id="CLU_016503_3_0_9"/>
<dbReference type="OrthoDB" id="9766614at2"/>
<dbReference type="Proteomes" id="UP000000821">
    <property type="component" value="Chromosome"/>
</dbReference>
<dbReference type="GO" id="GO:0005737">
    <property type="term" value="C:cytoplasm"/>
    <property type="evidence" value="ECO:0007669"/>
    <property type="project" value="UniProtKB-SubCell"/>
</dbReference>
<dbReference type="GO" id="GO:0005524">
    <property type="term" value="F:ATP binding"/>
    <property type="evidence" value="ECO:0007669"/>
    <property type="project" value="UniProtKB-UniRule"/>
</dbReference>
<dbReference type="GO" id="GO:0140662">
    <property type="term" value="F:ATP-dependent protein folding chaperone"/>
    <property type="evidence" value="ECO:0007669"/>
    <property type="project" value="InterPro"/>
</dbReference>
<dbReference type="GO" id="GO:0016853">
    <property type="term" value="F:isomerase activity"/>
    <property type="evidence" value="ECO:0007669"/>
    <property type="project" value="UniProtKB-KW"/>
</dbReference>
<dbReference type="GO" id="GO:0051082">
    <property type="term" value="F:unfolded protein binding"/>
    <property type="evidence" value="ECO:0007669"/>
    <property type="project" value="UniProtKB-UniRule"/>
</dbReference>
<dbReference type="GO" id="GO:0042026">
    <property type="term" value="P:protein refolding"/>
    <property type="evidence" value="ECO:0007669"/>
    <property type="project" value="UniProtKB-UniRule"/>
</dbReference>
<dbReference type="CDD" id="cd03344">
    <property type="entry name" value="GroEL"/>
    <property type="match status" value="1"/>
</dbReference>
<dbReference type="FunFam" id="1.10.560.10:FF:000001">
    <property type="entry name" value="60 kDa chaperonin"/>
    <property type="match status" value="1"/>
</dbReference>
<dbReference type="FunFam" id="3.50.7.10:FF:000001">
    <property type="entry name" value="60 kDa chaperonin"/>
    <property type="match status" value="1"/>
</dbReference>
<dbReference type="Gene3D" id="3.50.7.10">
    <property type="entry name" value="GroEL"/>
    <property type="match status" value="1"/>
</dbReference>
<dbReference type="Gene3D" id="1.10.560.10">
    <property type="entry name" value="GroEL-like equatorial domain"/>
    <property type="match status" value="1"/>
</dbReference>
<dbReference type="Gene3D" id="3.30.260.10">
    <property type="entry name" value="TCP-1-like chaperonin intermediate domain"/>
    <property type="match status" value="1"/>
</dbReference>
<dbReference type="HAMAP" id="MF_00600">
    <property type="entry name" value="CH60"/>
    <property type="match status" value="1"/>
</dbReference>
<dbReference type="InterPro" id="IPR018370">
    <property type="entry name" value="Chaperonin_Cpn60_CS"/>
</dbReference>
<dbReference type="InterPro" id="IPR001844">
    <property type="entry name" value="Cpn60/GroEL"/>
</dbReference>
<dbReference type="InterPro" id="IPR002423">
    <property type="entry name" value="Cpn60/GroEL/TCP-1"/>
</dbReference>
<dbReference type="InterPro" id="IPR027409">
    <property type="entry name" value="GroEL-like_apical_dom_sf"/>
</dbReference>
<dbReference type="InterPro" id="IPR027413">
    <property type="entry name" value="GROEL-like_equatorial_sf"/>
</dbReference>
<dbReference type="InterPro" id="IPR027410">
    <property type="entry name" value="TCP-1-like_intermed_sf"/>
</dbReference>
<dbReference type="NCBIfam" id="TIGR02348">
    <property type="entry name" value="GroEL"/>
    <property type="match status" value="1"/>
</dbReference>
<dbReference type="NCBIfam" id="NF000592">
    <property type="entry name" value="PRK00013.1"/>
    <property type="match status" value="1"/>
</dbReference>
<dbReference type="NCBIfam" id="NF009487">
    <property type="entry name" value="PRK12849.1"/>
    <property type="match status" value="1"/>
</dbReference>
<dbReference type="NCBIfam" id="NF009488">
    <property type="entry name" value="PRK12850.1"/>
    <property type="match status" value="1"/>
</dbReference>
<dbReference type="NCBIfam" id="NF009489">
    <property type="entry name" value="PRK12851.1"/>
    <property type="match status" value="1"/>
</dbReference>
<dbReference type="PANTHER" id="PTHR45633">
    <property type="entry name" value="60 KDA HEAT SHOCK PROTEIN, MITOCHONDRIAL"/>
    <property type="match status" value="1"/>
</dbReference>
<dbReference type="Pfam" id="PF00118">
    <property type="entry name" value="Cpn60_TCP1"/>
    <property type="match status" value="1"/>
</dbReference>
<dbReference type="PRINTS" id="PR00298">
    <property type="entry name" value="CHAPERONIN60"/>
</dbReference>
<dbReference type="SUPFAM" id="SSF52029">
    <property type="entry name" value="GroEL apical domain-like"/>
    <property type="match status" value="1"/>
</dbReference>
<dbReference type="SUPFAM" id="SSF48592">
    <property type="entry name" value="GroEL equatorial domain-like"/>
    <property type="match status" value="1"/>
</dbReference>
<dbReference type="SUPFAM" id="SSF54849">
    <property type="entry name" value="GroEL-intermediate domain like"/>
    <property type="match status" value="1"/>
</dbReference>
<dbReference type="PROSITE" id="PS00296">
    <property type="entry name" value="CHAPERONINS_CPN60"/>
    <property type="match status" value="1"/>
</dbReference>
<evidence type="ECO:0000255" key="1">
    <source>
        <dbReference type="HAMAP-Rule" id="MF_00600"/>
    </source>
</evidence>
<gene>
    <name evidence="1" type="primary">groEL</name>
    <name evidence="1" type="synonym">groL</name>
    <name type="ordered locus">SAG2074</name>
</gene>
<organism>
    <name type="scientific">Streptococcus agalactiae serotype V (strain ATCC BAA-611 / 2603 V/R)</name>
    <dbReference type="NCBI Taxonomy" id="208435"/>
    <lineage>
        <taxon>Bacteria</taxon>
        <taxon>Bacillati</taxon>
        <taxon>Bacillota</taxon>
        <taxon>Bacilli</taxon>
        <taxon>Lactobacillales</taxon>
        <taxon>Streptococcaceae</taxon>
        <taxon>Streptococcus</taxon>
    </lineage>
</organism>
<name>CH60_STRA5</name>